<comment type="function">
    <text evidence="1">Synthesizes alpha-1,4-glucan chains using ADP-glucose.</text>
</comment>
<comment type="catalytic activity">
    <reaction evidence="1">
        <text>[(1-&gt;4)-alpha-D-glucosyl](n) + ADP-alpha-D-glucose = [(1-&gt;4)-alpha-D-glucosyl](n+1) + ADP + H(+)</text>
        <dbReference type="Rhea" id="RHEA:18189"/>
        <dbReference type="Rhea" id="RHEA-COMP:9584"/>
        <dbReference type="Rhea" id="RHEA-COMP:9587"/>
        <dbReference type="ChEBI" id="CHEBI:15378"/>
        <dbReference type="ChEBI" id="CHEBI:15444"/>
        <dbReference type="ChEBI" id="CHEBI:57498"/>
        <dbReference type="ChEBI" id="CHEBI:456216"/>
        <dbReference type="EC" id="2.4.1.21"/>
    </reaction>
</comment>
<comment type="pathway">
    <text evidence="1">Glycan biosynthesis; glycogen biosynthesis.</text>
</comment>
<comment type="similarity">
    <text evidence="1">Belongs to the glycosyltransferase 1 family. Bacterial/plant glycogen synthase subfamily.</text>
</comment>
<gene>
    <name evidence="1" type="primary">glgA</name>
    <name type="ordered locus">Fjoh_2742</name>
</gene>
<evidence type="ECO:0000255" key="1">
    <source>
        <dbReference type="HAMAP-Rule" id="MF_00484"/>
    </source>
</evidence>
<name>GLGA_FLAJ1</name>
<dbReference type="EC" id="2.4.1.21" evidence="1"/>
<dbReference type="EMBL" id="CP000685">
    <property type="protein sequence ID" value="ABQ05764.1"/>
    <property type="molecule type" value="Genomic_DNA"/>
</dbReference>
<dbReference type="RefSeq" id="WP_012024803.1">
    <property type="nucleotide sequence ID" value="NC_009441.1"/>
</dbReference>
<dbReference type="SMR" id="A5FG96"/>
<dbReference type="STRING" id="376686.Fjoh_2742"/>
<dbReference type="CAZy" id="GT5">
    <property type="family name" value="Glycosyltransferase Family 5"/>
</dbReference>
<dbReference type="KEGG" id="fjo:Fjoh_2742"/>
<dbReference type="eggNOG" id="COG0297">
    <property type="taxonomic scope" value="Bacteria"/>
</dbReference>
<dbReference type="HOGENOM" id="CLU_009583_18_0_10"/>
<dbReference type="OrthoDB" id="9808590at2"/>
<dbReference type="UniPathway" id="UPA00164"/>
<dbReference type="Proteomes" id="UP000006694">
    <property type="component" value="Chromosome"/>
</dbReference>
<dbReference type="GO" id="GO:0009011">
    <property type="term" value="F:alpha-1,4-glucan glucosyltransferase (ADP-glucose donor) activity"/>
    <property type="evidence" value="ECO:0007669"/>
    <property type="project" value="UniProtKB-UniRule"/>
</dbReference>
<dbReference type="GO" id="GO:0004373">
    <property type="term" value="F:alpha-1,4-glucan glucosyltransferase (UDP-glucose donor) activity"/>
    <property type="evidence" value="ECO:0007669"/>
    <property type="project" value="InterPro"/>
</dbReference>
<dbReference type="GO" id="GO:0005978">
    <property type="term" value="P:glycogen biosynthetic process"/>
    <property type="evidence" value="ECO:0007669"/>
    <property type="project" value="UniProtKB-UniRule"/>
</dbReference>
<dbReference type="CDD" id="cd03791">
    <property type="entry name" value="GT5_Glycogen_synthase_DULL1-like"/>
    <property type="match status" value="1"/>
</dbReference>
<dbReference type="Gene3D" id="3.40.50.2000">
    <property type="entry name" value="Glycogen Phosphorylase B"/>
    <property type="match status" value="2"/>
</dbReference>
<dbReference type="HAMAP" id="MF_00484">
    <property type="entry name" value="Glycogen_synth"/>
    <property type="match status" value="1"/>
</dbReference>
<dbReference type="InterPro" id="IPR001296">
    <property type="entry name" value="Glyco_trans_1"/>
</dbReference>
<dbReference type="InterPro" id="IPR011835">
    <property type="entry name" value="GS/SS"/>
</dbReference>
<dbReference type="InterPro" id="IPR013534">
    <property type="entry name" value="Starch_synth_cat_dom"/>
</dbReference>
<dbReference type="NCBIfam" id="TIGR02095">
    <property type="entry name" value="glgA"/>
    <property type="match status" value="1"/>
</dbReference>
<dbReference type="PANTHER" id="PTHR45825:SF11">
    <property type="entry name" value="ALPHA AMYLASE DOMAIN-CONTAINING PROTEIN"/>
    <property type="match status" value="1"/>
</dbReference>
<dbReference type="PANTHER" id="PTHR45825">
    <property type="entry name" value="GRANULE-BOUND STARCH SYNTHASE 1, CHLOROPLASTIC/AMYLOPLASTIC"/>
    <property type="match status" value="1"/>
</dbReference>
<dbReference type="Pfam" id="PF08323">
    <property type="entry name" value="Glyco_transf_5"/>
    <property type="match status" value="1"/>
</dbReference>
<dbReference type="Pfam" id="PF00534">
    <property type="entry name" value="Glycos_transf_1"/>
    <property type="match status" value="1"/>
</dbReference>
<dbReference type="SUPFAM" id="SSF53756">
    <property type="entry name" value="UDP-Glycosyltransferase/glycogen phosphorylase"/>
    <property type="match status" value="1"/>
</dbReference>
<sequence length="473" mass="53910">MEIFHISAECYPMAKVGGLADVVGALPKYQKNAGNDVRVVVPAYDTKFKKENNFECVHWGTVKLGNFNFPFSVLKESSDKLGYELYLIEIKELFNRPNVYGYEDDIERFLSFQIAVLDWIIARNKVPDIINCHDHHTGLIPFLLQFAYKYENLKDVKTVITIHNGLYQGWFGFDKLYYLPEFDLKHIGFLEWNNCINSLAVGVKCANAVTTVSPSYLNEINYSANGLESLFNSVRNKSKGILNGIDIEIWNPLKDQMIAANYSIENFEIGKQKNKEKLCEQFELDPSKPLFSFIGRLFEEKGGDLLPQASALALSEHFEEINILILGSGNAEIESQLTQLRNDYKGNYNVFIGYNEELAHLIYAGSDYILMPSRVEPCGLNQMYAMRYGTIPIVRRTGGLRDTVIDFGDDGNGICHDQASVGDICYSINRAVKLYDDKISFNTVLRRGMAADHSWERVCQEYIEIYNLIIQQK</sequence>
<accession>A5FG96</accession>
<protein>
    <recommendedName>
        <fullName evidence="1">Glycogen synthase</fullName>
        <ecNumber evidence="1">2.4.1.21</ecNumber>
    </recommendedName>
    <alternativeName>
        <fullName evidence="1">Starch [bacterial glycogen] synthase</fullName>
    </alternativeName>
</protein>
<feature type="chain" id="PRO_1000081324" description="Glycogen synthase">
    <location>
        <begin position="1"/>
        <end position="473"/>
    </location>
</feature>
<feature type="binding site" evidence="1">
    <location>
        <position position="15"/>
    </location>
    <ligand>
        <name>ADP-alpha-D-glucose</name>
        <dbReference type="ChEBI" id="CHEBI:57498"/>
    </ligand>
</feature>
<organism>
    <name type="scientific">Flavobacterium johnsoniae (strain ATCC 17061 / DSM 2064 / JCM 8514 / BCRC 14874 / CCUG 350202 / NBRC 14942 / NCIMB 11054 / UW101)</name>
    <name type="common">Cytophaga johnsonae</name>
    <dbReference type="NCBI Taxonomy" id="376686"/>
    <lineage>
        <taxon>Bacteria</taxon>
        <taxon>Pseudomonadati</taxon>
        <taxon>Bacteroidota</taxon>
        <taxon>Flavobacteriia</taxon>
        <taxon>Flavobacteriales</taxon>
        <taxon>Flavobacteriaceae</taxon>
        <taxon>Flavobacterium</taxon>
    </lineage>
</organism>
<reference key="1">
    <citation type="journal article" date="2009" name="Appl. Environ. Microbiol.">
        <title>Novel features of the polysaccharide-digesting gliding bacterium Flavobacterium johnsoniae as revealed by genome sequence analysis.</title>
        <authorList>
            <person name="McBride M.J."/>
            <person name="Xie G."/>
            <person name="Martens E.C."/>
            <person name="Lapidus A."/>
            <person name="Henrissat B."/>
            <person name="Rhodes R.G."/>
            <person name="Goltsman E."/>
            <person name="Wang W."/>
            <person name="Xu J."/>
            <person name="Hunnicutt D.W."/>
            <person name="Staroscik A.M."/>
            <person name="Hoover T.R."/>
            <person name="Cheng Y.Q."/>
            <person name="Stein J.L."/>
        </authorList>
    </citation>
    <scope>NUCLEOTIDE SEQUENCE [LARGE SCALE GENOMIC DNA]</scope>
    <source>
        <strain>ATCC 17061 / DSM 2064 / JCM 8514 / BCRC 14874 / CCUG 350202 / NBRC 14942 / NCIMB 11054 / UW101</strain>
    </source>
</reference>
<keyword id="KW-0320">Glycogen biosynthesis</keyword>
<keyword id="KW-0328">Glycosyltransferase</keyword>
<keyword id="KW-0808">Transferase</keyword>
<proteinExistence type="inferred from homology"/>